<sequence>MELSDANLQTPTEYLKKTLDPDPAIRRPAEKFLESVEGNQNYPLLLLTLLEKSQDNVIKVCASVTFKNYIKRNWRIVEDEPNKICEADRVAIKANIVHLMLSSPEQIQKQLSDAISIIGREDFPQKWPDLLTEMVNRFQSGDFHVINGVLRTAHSLFKRYRHEFKSNELWTETKLVLDAFALPLTNLFKATIELCSTHANDASALRILFSSLILISKLFYSLNFQDLPEFFEDNMETWMNNFHTLLTLDNKLLQTDDEEEAGLLELLKSQICDNAALYAQKYDEEFQRYLPRFVTAIWNLLVTTGQEVKYDLLVSNAIQFLASVCERPHYKNLFEDQNTLTSICEKVIVPNMEFRAADEEAFEDNSEEYIRRDLEGSDIDTRRRAACDLVRGLCKFFEGPVTGIFSGYVNSMLQEYAKNPSVNWKHKDAAIYLVTSLASKAQTQKHGITQANELVNLTEFFVNHILPDLKSANVNEFPVLKADGIKYIMIFRNQVPKEHLLVSIPLLINHLQAESIVVHTYAAHALERLFTMRGPNNATLFTAAEIAPFVEILLTNLFKALTLPGSSENEYIMKAIMRSFSLLQEAIIPYIPTLITQLTQKLLAVSKNPSKPHFNHYMSEAICLSIRITCKANPAAVVNFEEALFLVFTEILQNDVQEFIPYVFQVMSLLLETHKNDIPSSYMALFPHLLQPVLWERTGNIPALVRLLQAFLERGSNTIASAAADKIPGLLGVFQKLIASKANDHQGFYLLNSIIEHMPPESVDQYRKQIFILLFQRLQNSKTTKFIKSFLVFINLYCIKYGALALQEIFDGIQPKMFGMVLEKIIIPEIQKVSGNVEKKICAVGITKLLTECPPMMDTEYTKLWTPLLQSLIGLFELPEDDTIPDEEHFIDIEDTPGYQTAFSQLAFAGKKEHDPVGQMVNNPKIHLAQSLHKLSTACPGRVPSMVSTSLNAEALQYLQGYLQAASVTLL</sequence>
<evidence type="ECO:0000250" key="1">
    <source>
        <dbReference type="UniProtKB" id="P55060"/>
    </source>
</evidence>
<evidence type="ECO:0000255" key="2">
    <source>
        <dbReference type="PROSITE-ProRule" id="PRU00115"/>
    </source>
</evidence>
<evidence type="ECO:0000305" key="3"/>
<accession>Q5R9J2</accession>
<comment type="function">
    <text evidence="1">Export receptor for importin-alpha. Mediates importin-alpha re-export from the nucleus to the cytoplasm after import substrates (cargos) have been released into the nucleoplasm. In the nucleus binds cooperatively to importin-alpha and to the GTPase Ran in its active GTP-bound form. Docking of this trimeric complex to the nuclear pore complex (NPC) is mediated through binding to nucleoporins. Upon transit of a nuclear export complex into the cytoplasm, disassembling of the complex and hydrolysis of Ran-GTP to Ran-GDP (induced by RANBP1 and RANGAP1, respectively) cause release of the importin-alpha from the export receptor. CSE1L/XPO2 then return to the nuclear compartment and mediate another round of transport. The directionality of nuclear export is thought to be conferred by an asymmetric distribution of the GTP- and GDP-bound forms of Ran between the cytoplasm and nucleus.</text>
</comment>
<comment type="subunit">
    <text evidence="1">Found in a complex with CSE1L/XPO2, Ran and KPNA2. Binds with high affinity to importin-alpha only in the presence of RanGTP. The complex is dissociated by the combined action of RanBP1 and RanGAP1. Interacts with CFTR.</text>
</comment>
<comment type="subcellular location">
    <subcellularLocation>
        <location evidence="1">Cytoplasm</location>
    </subcellularLocation>
    <subcellularLocation>
        <location evidence="1">Nucleus</location>
    </subcellularLocation>
    <text evidence="1">Shuttles between the nucleus and the cytoplasm.</text>
</comment>
<comment type="similarity">
    <text evidence="3">Belongs to the XPO2/CSE1 family.</text>
</comment>
<name>XPO2_PONAB</name>
<dbReference type="EMBL" id="CR859395">
    <property type="protein sequence ID" value="CAH91568.1"/>
    <property type="molecule type" value="mRNA"/>
</dbReference>
<dbReference type="RefSeq" id="NP_001125921.1">
    <property type="nucleotide sequence ID" value="NM_001132449.2"/>
</dbReference>
<dbReference type="SMR" id="Q5R9J2"/>
<dbReference type="STRING" id="9601.ENSPPYP00000023647"/>
<dbReference type="GeneID" id="100172855"/>
<dbReference type="KEGG" id="pon:100172855"/>
<dbReference type="CTD" id="1434"/>
<dbReference type="eggNOG" id="KOG1992">
    <property type="taxonomic scope" value="Eukaryota"/>
</dbReference>
<dbReference type="InParanoid" id="Q5R9J2"/>
<dbReference type="OrthoDB" id="3268246at2759"/>
<dbReference type="Proteomes" id="UP000001595">
    <property type="component" value="Unplaced"/>
</dbReference>
<dbReference type="GO" id="GO:0005829">
    <property type="term" value="C:cytosol"/>
    <property type="evidence" value="ECO:0007669"/>
    <property type="project" value="TreeGrafter"/>
</dbReference>
<dbReference type="GO" id="GO:0005635">
    <property type="term" value="C:nuclear envelope"/>
    <property type="evidence" value="ECO:0007669"/>
    <property type="project" value="TreeGrafter"/>
</dbReference>
<dbReference type="GO" id="GO:0005049">
    <property type="term" value="F:nuclear export signal receptor activity"/>
    <property type="evidence" value="ECO:0007669"/>
    <property type="project" value="TreeGrafter"/>
</dbReference>
<dbReference type="GO" id="GO:0031267">
    <property type="term" value="F:small GTPase binding"/>
    <property type="evidence" value="ECO:0007669"/>
    <property type="project" value="InterPro"/>
</dbReference>
<dbReference type="GO" id="GO:0006611">
    <property type="term" value="P:protein export from nucleus"/>
    <property type="evidence" value="ECO:0007669"/>
    <property type="project" value="TreeGrafter"/>
</dbReference>
<dbReference type="GO" id="GO:0006606">
    <property type="term" value="P:protein import into nucleus"/>
    <property type="evidence" value="ECO:0007669"/>
    <property type="project" value="TreeGrafter"/>
</dbReference>
<dbReference type="FunFam" id="1.25.10.10:FF:000057">
    <property type="entry name" value="Exportin-2 isoform 1"/>
    <property type="match status" value="1"/>
</dbReference>
<dbReference type="Gene3D" id="1.25.10.10">
    <property type="entry name" value="Leucine-rich Repeat Variant"/>
    <property type="match status" value="1"/>
</dbReference>
<dbReference type="InterPro" id="IPR011989">
    <property type="entry name" value="ARM-like"/>
</dbReference>
<dbReference type="InterPro" id="IPR016024">
    <property type="entry name" value="ARM-type_fold"/>
</dbReference>
<dbReference type="InterPro" id="IPR001494">
    <property type="entry name" value="Importin-beta_N"/>
</dbReference>
<dbReference type="InterPro" id="IPR005043">
    <property type="entry name" value="XPO2_C"/>
</dbReference>
<dbReference type="InterPro" id="IPR013713">
    <property type="entry name" value="XPO2_central"/>
</dbReference>
<dbReference type="PANTHER" id="PTHR10997:SF8">
    <property type="entry name" value="EXPORTIN-2"/>
    <property type="match status" value="1"/>
</dbReference>
<dbReference type="PANTHER" id="PTHR10997">
    <property type="entry name" value="IMPORTIN-7, 8, 11"/>
    <property type="match status" value="1"/>
</dbReference>
<dbReference type="Pfam" id="PF03378">
    <property type="entry name" value="CAS_CSE1"/>
    <property type="match status" value="1"/>
</dbReference>
<dbReference type="Pfam" id="PF08506">
    <property type="entry name" value="Cse1"/>
    <property type="match status" value="1"/>
</dbReference>
<dbReference type="Pfam" id="PF03810">
    <property type="entry name" value="IBN_N"/>
    <property type="match status" value="1"/>
</dbReference>
<dbReference type="SMART" id="SM00913">
    <property type="entry name" value="IBN_N"/>
    <property type="match status" value="1"/>
</dbReference>
<dbReference type="SUPFAM" id="SSF48371">
    <property type="entry name" value="ARM repeat"/>
    <property type="match status" value="1"/>
</dbReference>
<dbReference type="PROSITE" id="PS50166">
    <property type="entry name" value="IMPORTIN_B_NT"/>
    <property type="match status" value="1"/>
</dbReference>
<gene>
    <name type="primary">CSE1L</name>
    <name type="synonym">XPO2</name>
</gene>
<protein>
    <recommendedName>
        <fullName>Exportin-2</fullName>
        <shortName>Exp2</shortName>
    </recommendedName>
    <alternativeName>
        <fullName>Chromosome segregation 1-like protein</fullName>
    </alternativeName>
    <alternativeName>
        <fullName>Importin-alpha re-exporter</fullName>
    </alternativeName>
</protein>
<reference key="1">
    <citation type="submission" date="2004-11" db="EMBL/GenBank/DDBJ databases">
        <authorList>
            <consortium name="The German cDNA consortium"/>
        </authorList>
    </citation>
    <scope>NUCLEOTIDE SEQUENCE [LARGE SCALE MRNA]</scope>
    <source>
        <tissue>Brain cortex</tissue>
    </source>
</reference>
<proteinExistence type="evidence at transcript level"/>
<keyword id="KW-0007">Acetylation</keyword>
<keyword id="KW-0963">Cytoplasm</keyword>
<keyword id="KW-0539">Nucleus</keyword>
<keyword id="KW-0597">Phosphoprotein</keyword>
<keyword id="KW-0653">Protein transport</keyword>
<keyword id="KW-1185">Reference proteome</keyword>
<keyword id="KW-0813">Transport</keyword>
<organism>
    <name type="scientific">Pongo abelii</name>
    <name type="common">Sumatran orangutan</name>
    <name type="synonym">Pongo pygmaeus abelii</name>
    <dbReference type="NCBI Taxonomy" id="9601"/>
    <lineage>
        <taxon>Eukaryota</taxon>
        <taxon>Metazoa</taxon>
        <taxon>Chordata</taxon>
        <taxon>Craniata</taxon>
        <taxon>Vertebrata</taxon>
        <taxon>Euteleostomi</taxon>
        <taxon>Mammalia</taxon>
        <taxon>Eutheria</taxon>
        <taxon>Euarchontoglires</taxon>
        <taxon>Primates</taxon>
        <taxon>Haplorrhini</taxon>
        <taxon>Catarrhini</taxon>
        <taxon>Hominidae</taxon>
        <taxon>Pongo</taxon>
    </lineage>
</organism>
<feature type="chain" id="PRO_0000237679" description="Exportin-2">
    <location>
        <begin position="1"/>
        <end position="971"/>
    </location>
</feature>
<feature type="domain" description="Importin N-terminal" evidence="2">
    <location>
        <begin position="29"/>
        <end position="102"/>
    </location>
</feature>
<feature type="modified residue" description="N-acetylmethionine" evidence="1">
    <location>
        <position position="1"/>
    </location>
</feature>
<feature type="modified residue" description="Phosphoserine" evidence="1">
    <location>
        <position position="112"/>
    </location>
</feature>
<feature type="modified residue" description="N6-acetyllysine" evidence="1">
    <location>
        <position position="574"/>
    </location>
</feature>
<feature type="modified residue" description="N6-acetyllysine" evidence="1">
    <location>
        <position position="824"/>
    </location>
</feature>
<feature type="modified residue" description="Phosphoserine" evidence="1">
    <location>
        <position position="931"/>
    </location>
</feature>